<dbReference type="EC" id="2.7.7.6" evidence="1"/>
<dbReference type="EMBL" id="DQ923116">
    <property type="protein sequence ID" value="ABI49769.1"/>
    <property type="molecule type" value="Genomic_DNA"/>
</dbReference>
<dbReference type="RefSeq" id="YP_740556.1">
    <property type="nucleotide sequence ID" value="NC_008335.1"/>
</dbReference>
<dbReference type="SMR" id="Q09G55"/>
<dbReference type="GeneID" id="4271288"/>
<dbReference type="GO" id="GO:0009507">
    <property type="term" value="C:chloroplast"/>
    <property type="evidence" value="ECO:0007669"/>
    <property type="project" value="UniProtKB-SubCell"/>
</dbReference>
<dbReference type="GO" id="GO:0000428">
    <property type="term" value="C:DNA-directed RNA polymerase complex"/>
    <property type="evidence" value="ECO:0007669"/>
    <property type="project" value="UniProtKB-KW"/>
</dbReference>
<dbReference type="GO" id="GO:0005739">
    <property type="term" value="C:mitochondrion"/>
    <property type="evidence" value="ECO:0007669"/>
    <property type="project" value="GOC"/>
</dbReference>
<dbReference type="GO" id="GO:0003677">
    <property type="term" value="F:DNA binding"/>
    <property type="evidence" value="ECO:0007669"/>
    <property type="project" value="UniProtKB-UniRule"/>
</dbReference>
<dbReference type="GO" id="GO:0003899">
    <property type="term" value="F:DNA-directed RNA polymerase activity"/>
    <property type="evidence" value="ECO:0007669"/>
    <property type="project" value="UniProtKB-UniRule"/>
</dbReference>
<dbReference type="GO" id="GO:0000287">
    <property type="term" value="F:magnesium ion binding"/>
    <property type="evidence" value="ECO:0007669"/>
    <property type="project" value="UniProtKB-UniRule"/>
</dbReference>
<dbReference type="GO" id="GO:0008270">
    <property type="term" value="F:zinc ion binding"/>
    <property type="evidence" value="ECO:0007669"/>
    <property type="project" value="UniProtKB-UniRule"/>
</dbReference>
<dbReference type="GO" id="GO:0006351">
    <property type="term" value="P:DNA-templated transcription"/>
    <property type="evidence" value="ECO:0007669"/>
    <property type="project" value="UniProtKB-UniRule"/>
</dbReference>
<dbReference type="FunFam" id="4.10.860.120:FF:000007">
    <property type="entry name" value="DNA-directed RNA polymerase subunit gamma"/>
    <property type="match status" value="1"/>
</dbReference>
<dbReference type="Gene3D" id="1.10.40.90">
    <property type="match status" value="1"/>
</dbReference>
<dbReference type="Gene3D" id="2.40.40.20">
    <property type="match status" value="1"/>
</dbReference>
<dbReference type="Gene3D" id="4.10.860.120">
    <property type="entry name" value="RNA polymerase II, clamp domain"/>
    <property type="match status" value="1"/>
</dbReference>
<dbReference type="Gene3D" id="1.10.274.100">
    <property type="entry name" value="RNA polymerase Rpb1, domain 3"/>
    <property type="match status" value="1"/>
</dbReference>
<dbReference type="HAMAP" id="MF_01323">
    <property type="entry name" value="RNApol_bact_RpoC1"/>
    <property type="match status" value="1"/>
</dbReference>
<dbReference type="InterPro" id="IPR045867">
    <property type="entry name" value="DNA-dir_RpoC_beta_prime"/>
</dbReference>
<dbReference type="InterPro" id="IPR000722">
    <property type="entry name" value="RNA_pol_asu"/>
</dbReference>
<dbReference type="InterPro" id="IPR006592">
    <property type="entry name" value="RNA_pol_N"/>
</dbReference>
<dbReference type="InterPro" id="IPR007080">
    <property type="entry name" value="RNA_pol_Rpb1_1"/>
</dbReference>
<dbReference type="InterPro" id="IPR042102">
    <property type="entry name" value="RNA_pol_Rpb1_3_sf"/>
</dbReference>
<dbReference type="InterPro" id="IPR044893">
    <property type="entry name" value="RNA_pol_Rpb1_clamp_domain"/>
</dbReference>
<dbReference type="InterPro" id="IPR034678">
    <property type="entry name" value="RNApol_RpoC1"/>
</dbReference>
<dbReference type="PANTHER" id="PTHR19376">
    <property type="entry name" value="DNA-DIRECTED RNA POLYMERASE"/>
    <property type="match status" value="1"/>
</dbReference>
<dbReference type="PANTHER" id="PTHR19376:SF54">
    <property type="entry name" value="DNA-DIRECTED RNA POLYMERASE SUBUNIT BETA"/>
    <property type="match status" value="1"/>
</dbReference>
<dbReference type="Pfam" id="PF04997">
    <property type="entry name" value="RNA_pol_Rpb1_1"/>
    <property type="match status" value="2"/>
</dbReference>
<dbReference type="Pfam" id="PF00623">
    <property type="entry name" value="RNA_pol_Rpb1_2"/>
    <property type="match status" value="2"/>
</dbReference>
<dbReference type="SMART" id="SM00663">
    <property type="entry name" value="RPOLA_N"/>
    <property type="match status" value="1"/>
</dbReference>
<dbReference type="SUPFAM" id="SSF64484">
    <property type="entry name" value="beta and beta-prime subunits of DNA dependent RNA-polymerase"/>
    <property type="match status" value="1"/>
</dbReference>
<gene>
    <name evidence="1" type="primary">rpoC1</name>
</gene>
<protein>
    <recommendedName>
        <fullName evidence="1">DNA-directed RNA polymerase subunit beta'</fullName>
        <ecNumber evidence="1">2.7.7.6</ecNumber>
    </recommendedName>
    <alternativeName>
        <fullName evidence="1">PEP</fullName>
    </alternativeName>
    <alternativeName>
        <fullName evidence="1">Plastid-encoded RNA polymerase subunit beta'</fullName>
        <shortName evidence="1">RNA polymerase subunit beta'</shortName>
    </alternativeName>
</protein>
<evidence type="ECO:0000255" key="1">
    <source>
        <dbReference type="HAMAP-Rule" id="MF_01323"/>
    </source>
</evidence>
<name>RPOC1_PLAOC</name>
<feature type="chain" id="PRO_0000353511" description="DNA-directed RNA polymerase subunit beta'">
    <location>
        <begin position="1"/>
        <end position="682"/>
    </location>
</feature>
<feature type="binding site" evidence="1">
    <location>
        <position position="69"/>
    </location>
    <ligand>
        <name>Zn(2+)</name>
        <dbReference type="ChEBI" id="CHEBI:29105"/>
    </ligand>
</feature>
<feature type="binding site" evidence="1">
    <location>
        <position position="71"/>
    </location>
    <ligand>
        <name>Zn(2+)</name>
        <dbReference type="ChEBI" id="CHEBI:29105"/>
    </ligand>
</feature>
<feature type="binding site" evidence="1">
    <location>
        <position position="87"/>
    </location>
    <ligand>
        <name>Zn(2+)</name>
        <dbReference type="ChEBI" id="CHEBI:29105"/>
    </ligand>
</feature>
<feature type="binding site" evidence="1">
    <location>
        <position position="90"/>
    </location>
    <ligand>
        <name>Zn(2+)</name>
        <dbReference type="ChEBI" id="CHEBI:29105"/>
    </ligand>
</feature>
<feature type="binding site" evidence="1">
    <location>
        <position position="489"/>
    </location>
    <ligand>
        <name>Mg(2+)</name>
        <dbReference type="ChEBI" id="CHEBI:18420"/>
    </ligand>
</feature>
<feature type="binding site" evidence="1">
    <location>
        <position position="491"/>
    </location>
    <ligand>
        <name>Mg(2+)</name>
        <dbReference type="ChEBI" id="CHEBI:18420"/>
    </ligand>
</feature>
<feature type="binding site" evidence="1">
    <location>
        <position position="493"/>
    </location>
    <ligand>
        <name>Mg(2+)</name>
        <dbReference type="ChEBI" id="CHEBI:18420"/>
    </ligand>
</feature>
<comment type="function">
    <text evidence="1">DNA-dependent RNA polymerase catalyzes the transcription of DNA into RNA using the four ribonucleoside triphosphates as substrates.</text>
</comment>
<comment type="catalytic activity">
    <reaction evidence="1">
        <text>RNA(n) + a ribonucleoside 5'-triphosphate = RNA(n+1) + diphosphate</text>
        <dbReference type="Rhea" id="RHEA:21248"/>
        <dbReference type="Rhea" id="RHEA-COMP:14527"/>
        <dbReference type="Rhea" id="RHEA-COMP:17342"/>
        <dbReference type="ChEBI" id="CHEBI:33019"/>
        <dbReference type="ChEBI" id="CHEBI:61557"/>
        <dbReference type="ChEBI" id="CHEBI:140395"/>
        <dbReference type="EC" id="2.7.7.6"/>
    </reaction>
</comment>
<comment type="cofactor">
    <cofactor evidence="1">
        <name>Mg(2+)</name>
        <dbReference type="ChEBI" id="CHEBI:18420"/>
    </cofactor>
    <text evidence="1">Binds 1 Mg(2+) ion per subunit.</text>
</comment>
<comment type="cofactor">
    <cofactor evidence="1">
        <name>Zn(2+)</name>
        <dbReference type="ChEBI" id="CHEBI:29105"/>
    </cofactor>
    <text evidence="1">Binds 1 Zn(2+) ion per subunit.</text>
</comment>
<comment type="subunit">
    <text evidence="1">In plastids the minimal PEP RNA polymerase catalytic core is composed of four subunits: alpha, beta, beta', and beta''. When a (nuclear-encoded) sigma factor is associated with the core the holoenzyme is formed, which can initiate transcription.</text>
</comment>
<comment type="subcellular location">
    <subcellularLocation>
        <location evidence="1">Plastid</location>
        <location evidence="1">Chloroplast</location>
    </subcellularLocation>
</comment>
<comment type="similarity">
    <text evidence="1">Belongs to the RNA polymerase beta' chain family. RpoC1 subfamily.</text>
</comment>
<keyword id="KW-0150">Chloroplast</keyword>
<keyword id="KW-0240">DNA-directed RNA polymerase</keyword>
<keyword id="KW-0460">Magnesium</keyword>
<keyword id="KW-0479">Metal-binding</keyword>
<keyword id="KW-0548">Nucleotidyltransferase</keyword>
<keyword id="KW-0934">Plastid</keyword>
<keyword id="KW-0804">Transcription</keyword>
<keyword id="KW-0808">Transferase</keyword>
<keyword id="KW-0862">Zinc</keyword>
<sequence length="682" mass="78674">MIDRYKHQQLRIGSVSPQQISAWAKKILPNGEIVGEVTKPYTFHYKTNKPEKDGLFCERIFGPIKSGICACGNYRVIGDEKEDPKFCEQCGVEFVDSRVRRYQMGYIKLACPVTHVWYLKRLPSYIANLLDKPLRELEGLVYCDFSFARPIAKKPTFLRLRGSFEYEIQSWKYSIPLFFTTQGFDTFRNREISTGAGAIREQLADLDLRIITAYSLVEWKELGEEGPTGNEWEDRKIGRRKDFLVRRMELAKHFIRTNVEPEWMVLCLLPVLPPELRPIIQIDGGKLMSSDINELYRRVIYRNNTLTDLLTTSRSTPGESVMCQEKLVQEAVDTLLDNGIRGQPMRDGHNKVYKSFSDVIEGKEGRFRETLLGKRVDYSGRSVIVVGPSLSLHRCGLPREIAIELFQTFVIRGLIRQHLASNIGVAKSKIREREPIVWEILQKVIQGHPVLLNRAPTLHRLGIQAFQPILVEGCAICLHPLVRKGFNADFDGDQMAVHVPLSLEAQAEARLLMFSHMNLLSPAIGDPISVPTQDMLMGLYVLTIGNRRGICANRYNPRNRRNYQNERIDDNNYRYTKEKEPYFCSSYDALGAYRQKRINLDSPLWLRWRLDQRVIASREVPIEVQYESLGTYHEIYGHYLIVRSVKKEILCIYIRTTVGHISFYREIEEAIQGFCRACSYGT</sequence>
<proteinExistence type="inferred from homology"/>
<reference key="1">
    <citation type="journal article" date="2006" name="BMC Plant Biol.">
        <title>Rapid and accurate pyrosequencing of angiosperm plastid genomes.</title>
        <authorList>
            <person name="Moore M.J."/>
            <person name="Dhingra A."/>
            <person name="Soltis P.S."/>
            <person name="Shaw R."/>
            <person name="Farmerie W.G."/>
            <person name="Folta K.M."/>
            <person name="Soltis D.E."/>
        </authorList>
    </citation>
    <scope>NUCLEOTIDE SEQUENCE [LARGE SCALE GENOMIC DNA]</scope>
</reference>
<geneLocation type="chloroplast"/>
<organism>
    <name type="scientific">Platanus occidentalis</name>
    <name type="common">Sycamore</name>
    <name type="synonym">American plane tree</name>
    <dbReference type="NCBI Taxonomy" id="4403"/>
    <lineage>
        <taxon>Eukaryota</taxon>
        <taxon>Viridiplantae</taxon>
        <taxon>Streptophyta</taxon>
        <taxon>Embryophyta</taxon>
        <taxon>Tracheophyta</taxon>
        <taxon>Spermatophyta</taxon>
        <taxon>Magnoliopsida</taxon>
        <taxon>Proteales</taxon>
        <taxon>Platanaceae</taxon>
        <taxon>Platanus</taxon>
    </lineage>
</organism>
<accession>Q09G55</accession>